<proteinExistence type="evidence at transcript level"/>
<sequence>MARYRHSRSRSRSRYRRRRRRRSRYRSRRRRYRGRRRRRSRRGRRRGYSRRRYSRRRRRRY</sequence>
<feature type="chain" id="PRO_0000191515" description="Sperm protamine P1">
    <location>
        <begin position="1"/>
        <end position="61"/>
    </location>
</feature>
<feature type="region of interest" description="Disordered" evidence="1">
    <location>
        <begin position="1"/>
        <end position="61"/>
    </location>
</feature>
<protein>
    <recommendedName>
        <fullName>Sperm protamine P1</fullName>
    </recommendedName>
</protein>
<name>HSP1_ONYUN</name>
<dbReference type="EMBL" id="AF187543">
    <property type="protein sequence ID" value="AAG27960.1"/>
    <property type="molecule type" value="Genomic_DNA"/>
</dbReference>
<dbReference type="GO" id="GO:0000786">
    <property type="term" value="C:nucleosome"/>
    <property type="evidence" value="ECO:0007669"/>
    <property type="project" value="UniProtKB-KW"/>
</dbReference>
<dbReference type="GO" id="GO:0005634">
    <property type="term" value="C:nucleus"/>
    <property type="evidence" value="ECO:0007669"/>
    <property type="project" value="UniProtKB-SubCell"/>
</dbReference>
<dbReference type="GO" id="GO:0003677">
    <property type="term" value="F:DNA binding"/>
    <property type="evidence" value="ECO:0007669"/>
    <property type="project" value="UniProtKB-KW"/>
</dbReference>
<dbReference type="GO" id="GO:0030261">
    <property type="term" value="P:chromosome condensation"/>
    <property type="evidence" value="ECO:0007669"/>
    <property type="project" value="UniProtKB-KW"/>
</dbReference>
<dbReference type="GO" id="GO:0035092">
    <property type="term" value="P:sperm DNA condensation"/>
    <property type="evidence" value="ECO:0007669"/>
    <property type="project" value="InterPro"/>
</dbReference>
<dbReference type="InterPro" id="IPR000221">
    <property type="entry name" value="Protamine_P1"/>
</dbReference>
<dbReference type="PROSITE" id="PS00048">
    <property type="entry name" value="PROTAMINE_P1"/>
    <property type="match status" value="1"/>
</dbReference>
<evidence type="ECO:0000256" key="1">
    <source>
        <dbReference type="SAM" id="MobiDB-lite"/>
    </source>
</evidence>
<evidence type="ECO:0000305" key="2"/>
<keyword id="KW-0158">Chromosome</keyword>
<keyword id="KW-0217">Developmental protein</keyword>
<keyword id="KW-0221">Differentiation</keyword>
<keyword id="KW-0226">DNA condensation</keyword>
<keyword id="KW-0238">DNA-binding</keyword>
<keyword id="KW-0544">Nucleosome core</keyword>
<keyword id="KW-0539">Nucleus</keyword>
<keyword id="KW-0744">Spermatogenesis</keyword>
<gene>
    <name type="primary">PRM1</name>
</gene>
<organism>
    <name type="scientific">Onychogalea unguifera</name>
    <name type="common">Northern nail-tailed wallaby</name>
    <dbReference type="NCBI Taxonomy" id="65626"/>
    <lineage>
        <taxon>Eukaryota</taxon>
        <taxon>Metazoa</taxon>
        <taxon>Chordata</taxon>
        <taxon>Craniata</taxon>
        <taxon>Vertebrata</taxon>
        <taxon>Euteleostomi</taxon>
        <taxon>Mammalia</taxon>
        <taxon>Metatheria</taxon>
        <taxon>Diprotodontia</taxon>
        <taxon>Macropodidae</taxon>
        <taxon>Onychogalea</taxon>
    </lineage>
</organism>
<reference key="1">
    <citation type="journal article" date="2000" name="J. Mammal. Evol.">
        <title>Intergeneric relationships among Macropodoidea (Metatheria: Diprotodontia) and the chronicle of kangaroo evolution.</title>
        <authorList>
            <person name="Burk A."/>
            <person name="Springer M.S."/>
        </authorList>
    </citation>
    <scope>NUCLEOTIDE SEQUENCE [GENOMIC DNA]</scope>
</reference>
<accession>P67839</accession>
<accession>Q9GJQ1</accession>
<comment type="function">
    <text>Protamines substitute for histones in the chromatin of sperm during the haploid phase of spermatogenesis. They compact sperm DNA into a highly condensed, stable and inactive complex.</text>
</comment>
<comment type="subcellular location">
    <subcellularLocation>
        <location>Nucleus</location>
    </subcellularLocation>
    <subcellularLocation>
        <location>Chromosome</location>
    </subcellularLocation>
</comment>
<comment type="tissue specificity">
    <text>Testis.</text>
</comment>
<comment type="similarity">
    <text evidence="2">Belongs to the protamine P1 family.</text>
</comment>